<comment type="function">
    <text evidence="1">One of the primary rRNA binding proteins. Required for association of the 30S and 50S subunits to form the 70S ribosome, for tRNA binding and peptide bond formation. It has been suggested to have peptidyltransferase activity; this is somewhat controversial. Makes several contacts with the 16S rRNA in the 70S ribosome.</text>
</comment>
<comment type="subunit">
    <text evidence="1">Part of the 50S ribosomal subunit. Forms a bridge to the 30S subunit in the 70S ribosome.</text>
</comment>
<comment type="similarity">
    <text evidence="1">Belongs to the universal ribosomal protein uL2 family.</text>
</comment>
<proteinExistence type="inferred from homology"/>
<dbReference type="EMBL" id="CP000950">
    <property type="protein sequence ID" value="ACA66599.1"/>
    <property type="molecule type" value="Genomic_DNA"/>
</dbReference>
<dbReference type="RefSeq" id="WP_002213425.1">
    <property type="nucleotide sequence ID" value="NZ_CP009792.1"/>
</dbReference>
<dbReference type="SMR" id="B1JIW4"/>
<dbReference type="GeneID" id="97454234"/>
<dbReference type="KEGG" id="ypy:YPK_0286"/>
<dbReference type="PATRIC" id="fig|502800.11.peg.893"/>
<dbReference type="GO" id="GO:0015934">
    <property type="term" value="C:large ribosomal subunit"/>
    <property type="evidence" value="ECO:0007669"/>
    <property type="project" value="InterPro"/>
</dbReference>
<dbReference type="GO" id="GO:0019843">
    <property type="term" value="F:rRNA binding"/>
    <property type="evidence" value="ECO:0007669"/>
    <property type="project" value="UniProtKB-UniRule"/>
</dbReference>
<dbReference type="GO" id="GO:0003735">
    <property type="term" value="F:structural constituent of ribosome"/>
    <property type="evidence" value="ECO:0007669"/>
    <property type="project" value="InterPro"/>
</dbReference>
<dbReference type="GO" id="GO:0016740">
    <property type="term" value="F:transferase activity"/>
    <property type="evidence" value="ECO:0007669"/>
    <property type="project" value="InterPro"/>
</dbReference>
<dbReference type="GO" id="GO:0002181">
    <property type="term" value="P:cytoplasmic translation"/>
    <property type="evidence" value="ECO:0007669"/>
    <property type="project" value="TreeGrafter"/>
</dbReference>
<dbReference type="FunFam" id="2.30.30.30:FF:000001">
    <property type="entry name" value="50S ribosomal protein L2"/>
    <property type="match status" value="1"/>
</dbReference>
<dbReference type="FunFam" id="2.40.50.140:FF:000003">
    <property type="entry name" value="50S ribosomal protein L2"/>
    <property type="match status" value="1"/>
</dbReference>
<dbReference type="FunFam" id="4.10.950.10:FF:000001">
    <property type="entry name" value="50S ribosomal protein L2"/>
    <property type="match status" value="1"/>
</dbReference>
<dbReference type="Gene3D" id="2.30.30.30">
    <property type="match status" value="1"/>
</dbReference>
<dbReference type="Gene3D" id="2.40.50.140">
    <property type="entry name" value="Nucleic acid-binding proteins"/>
    <property type="match status" value="1"/>
</dbReference>
<dbReference type="Gene3D" id="4.10.950.10">
    <property type="entry name" value="Ribosomal protein L2, domain 3"/>
    <property type="match status" value="1"/>
</dbReference>
<dbReference type="HAMAP" id="MF_01320_B">
    <property type="entry name" value="Ribosomal_uL2_B"/>
    <property type="match status" value="1"/>
</dbReference>
<dbReference type="InterPro" id="IPR012340">
    <property type="entry name" value="NA-bd_OB-fold"/>
</dbReference>
<dbReference type="InterPro" id="IPR014722">
    <property type="entry name" value="Rib_uL2_dom2"/>
</dbReference>
<dbReference type="InterPro" id="IPR002171">
    <property type="entry name" value="Ribosomal_uL2"/>
</dbReference>
<dbReference type="InterPro" id="IPR005880">
    <property type="entry name" value="Ribosomal_uL2_bac/org-type"/>
</dbReference>
<dbReference type="InterPro" id="IPR022669">
    <property type="entry name" value="Ribosomal_uL2_C"/>
</dbReference>
<dbReference type="InterPro" id="IPR022671">
    <property type="entry name" value="Ribosomal_uL2_CS"/>
</dbReference>
<dbReference type="InterPro" id="IPR014726">
    <property type="entry name" value="Ribosomal_uL2_dom3"/>
</dbReference>
<dbReference type="InterPro" id="IPR022666">
    <property type="entry name" value="Ribosomal_uL2_RNA-bd_dom"/>
</dbReference>
<dbReference type="InterPro" id="IPR008991">
    <property type="entry name" value="Translation_prot_SH3-like_sf"/>
</dbReference>
<dbReference type="NCBIfam" id="TIGR01171">
    <property type="entry name" value="rplB_bact"/>
    <property type="match status" value="1"/>
</dbReference>
<dbReference type="PANTHER" id="PTHR13691:SF5">
    <property type="entry name" value="LARGE RIBOSOMAL SUBUNIT PROTEIN UL2M"/>
    <property type="match status" value="1"/>
</dbReference>
<dbReference type="PANTHER" id="PTHR13691">
    <property type="entry name" value="RIBOSOMAL PROTEIN L2"/>
    <property type="match status" value="1"/>
</dbReference>
<dbReference type="Pfam" id="PF00181">
    <property type="entry name" value="Ribosomal_L2"/>
    <property type="match status" value="1"/>
</dbReference>
<dbReference type="Pfam" id="PF03947">
    <property type="entry name" value="Ribosomal_L2_C"/>
    <property type="match status" value="1"/>
</dbReference>
<dbReference type="PIRSF" id="PIRSF002158">
    <property type="entry name" value="Ribosomal_L2"/>
    <property type="match status" value="1"/>
</dbReference>
<dbReference type="SMART" id="SM01383">
    <property type="entry name" value="Ribosomal_L2"/>
    <property type="match status" value="1"/>
</dbReference>
<dbReference type="SMART" id="SM01382">
    <property type="entry name" value="Ribosomal_L2_C"/>
    <property type="match status" value="1"/>
</dbReference>
<dbReference type="SUPFAM" id="SSF50249">
    <property type="entry name" value="Nucleic acid-binding proteins"/>
    <property type="match status" value="1"/>
</dbReference>
<dbReference type="SUPFAM" id="SSF50104">
    <property type="entry name" value="Translation proteins SH3-like domain"/>
    <property type="match status" value="1"/>
</dbReference>
<dbReference type="PROSITE" id="PS00467">
    <property type="entry name" value="RIBOSOMAL_L2"/>
    <property type="match status" value="1"/>
</dbReference>
<keyword id="KW-0687">Ribonucleoprotein</keyword>
<keyword id="KW-0689">Ribosomal protein</keyword>
<keyword id="KW-0694">RNA-binding</keyword>
<keyword id="KW-0699">rRNA-binding</keyword>
<evidence type="ECO:0000255" key="1">
    <source>
        <dbReference type="HAMAP-Rule" id="MF_01320"/>
    </source>
</evidence>
<evidence type="ECO:0000256" key="2">
    <source>
        <dbReference type="SAM" id="MobiDB-lite"/>
    </source>
</evidence>
<evidence type="ECO:0000305" key="3"/>
<gene>
    <name evidence="1" type="primary">rplB</name>
    <name type="ordered locus">YPK_0286</name>
</gene>
<name>RL2_YERPY</name>
<accession>B1JIW4</accession>
<feature type="chain" id="PRO_1000141646" description="Large ribosomal subunit protein uL2">
    <location>
        <begin position="1"/>
        <end position="274"/>
    </location>
</feature>
<feature type="region of interest" description="Disordered" evidence="2">
    <location>
        <begin position="221"/>
        <end position="274"/>
    </location>
</feature>
<sequence length="274" mass="30073">MAIVKCKPTSPGRRHVVKVVNPELHKGKPYAPLLEKLSKSGGRNNNGRITTRHIGGGHKQHYRLVDFKRNKDGIPAVVERLEYDPNRSANIALVLYKDGERRYILAPKGLKAGDQIQSGVDAAIKAGNTLPMRNIPVGSTVHNVEMKPGKGGQLARSAGAYVQIVARDGSYVTLRLRSGEMRKVQADCRATLGEVGNAEHMLRVLGKAGASRWRGIRPTVRGTAMNPVDHPHGGGEGRNFGKHPVTPWGVQTKGKKTRSNKRTDKFIVRRRSKK</sequence>
<organism>
    <name type="scientific">Yersinia pseudotuberculosis serotype O:3 (strain YPIII)</name>
    <dbReference type="NCBI Taxonomy" id="502800"/>
    <lineage>
        <taxon>Bacteria</taxon>
        <taxon>Pseudomonadati</taxon>
        <taxon>Pseudomonadota</taxon>
        <taxon>Gammaproteobacteria</taxon>
        <taxon>Enterobacterales</taxon>
        <taxon>Yersiniaceae</taxon>
        <taxon>Yersinia</taxon>
    </lineage>
</organism>
<protein>
    <recommendedName>
        <fullName evidence="1">Large ribosomal subunit protein uL2</fullName>
    </recommendedName>
    <alternativeName>
        <fullName evidence="3">50S ribosomal protein L2</fullName>
    </alternativeName>
</protein>
<reference key="1">
    <citation type="submission" date="2008-02" db="EMBL/GenBank/DDBJ databases">
        <title>Complete sequence of Yersinia pseudotuberculosis YPIII.</title>
        <authorList>
            <consortium name="US DOE Joint Genome Institute"/>
            <person name="Copeland A."/>
            <person name="Lucas S."/>
            <person name="Lapidus A."/>
            <person name="Glavina del Rio T."/>
            <person name="Dalin E."/>
            <person name="Tice H."/>
            <person name="Bruce D."/>
            <person name="Goodwin L."/>
            <person name="Pitluck S."/>
            <person name="Munk A.C."/>
            <person name="Brettin T."/>
            <person name="Detter J.C."/>
            <person name="Han C."/>
            <person name="Tapia R."/>
            <person name="Schmutz J."/>
            <person name="Larimer F."/>
            <person name="Land M."/>
            <person name="Hauser L."/>
            <person name="Challacombe J.F."/>
            <person name="Green L."/>
            <person name="Lindler L.E."/>
            <person name="Nikolich M.P."/>
            <person name="Richardson P."/>
        </authorList>
    </citation>
    <scope>NUCLEOTIDE SEQUENCE [LARGE SCALE GENOMIC DNA]</scope>
    <source>
        <strain>YPIII</strain>
    </source>
</reference>